<reference key="1">
    <citation type="journal article" date="2005" name="Nature">
        <title>Genomic sequence of the pathogenic and allergenic filamentous fungus Aspergillus fumigatus.</title>
        <authorList>
            <person name="Nierman W.C."/>
            <person name="Pain A."/>
            <person name="Anderson M.J."/>
            <person name="Wortman J.R."/>
            <person name="Kim H.S."/>
            <person name="Arroyo J."/>
            <person name="Berriman M."/>
            <person name="Abe K."/>
            <person name="Archer D.B."/>
            <person name="Bermejo C."/>
            <person name="Bennett J.W."/>
            <person name="Bowyer P."/>
            <person name="Chen D."/>
            <person name="Collins M."/>
            <person name="Coulsen R."/>
            <person name="Davies R."/>
            <person name="Dyer P.S."/>
            <person name="Farman M.L."/>
            <person name="Fedorova N."/>
            <person name="Fedorova N.D."/>
            <person name="Feldblyum T.V."/>
            <person name="Fischer R."/>
            <person name="Fosker N."/>
            <person name="Fraser A."/>
            <person name="Garcia J.L."/>
            <person name="Garcia M.J."/>
            <person name="Goble A."/>
            <person name="Goldman G.H."/>
            <person name="Gomi K."/>
            <person name="Griffith-Jones S."/>
            <person name="Gwilliam R."/>
            <person name="Haas B.J."/>
            <person name="Haas H."/>
            <person name="Harris D.E."/>
            <person name="Horiuchi H."/>
            <person name="Huang J."/>
            <person name="Humphray S."/>
            <person name="Jimenez J."/>
            <person name="Keller N."/>
            <person name="Khouri H."/>
            <person name="Kitamoto K."/>
            <person name="Kobayashi T."/>
            <person name="Konzack S."/>
            <person name="Kulkarni R."/>
            <person name="Kumagai T."/>
            <person name="Lafton A."/>
            <person name="Latge J.-P."/>
            <person name="Li W."/>
            <person name="Lord A."/>
            <person name="Lu C."/>
            <person name="Majoros W.H."/>
            <person name="May G.S."/>
            <person name="Miller B.L."/>
            <person name="Mohamoud Y."/>
            <person name="Molina M."/>
            <person name="Monod M."/>
            <person name="Mouyna I."/>
            <person name="Mulligan S."/>
            <person name="Murphy L.D."/>
            <person name="O'Neil S."/>
            <person name="Paulsen I."/>
            <person name="Penalva M.A."/>
            <person name="Pertea M."/>
            <person name="Price C."/>
            <person name="Pritchard B.L."/>
            <person name="Quail M.A."/>
            <person name="Rabbinowitsch E."/>
            <person name="Rawlins N."/>
            <person name="Rajandream M.A."/>
            <person name="Reichard U."/>
            <person name="Renauld H."/>
            <person name="Robson G.D."/>
            <person name="Rodriguez de Cordoba S."/>
            <person name="Rodriguez-Pena J.M."/>
            <person name="Ronning C.M."/>
            <person name="Rutter S."/>
            <person name="Salzberg S.L."/>
            <person name="Sanchez M."/>
            <person name="Sanchez-Ferrero J.C."/>
            <person name="Saunders D."/>
            <person name="Seeger K."/>
            <person name="Squares R."/>
            <person name="Squares S."/>
            <person name="Takeuchi M."/>
            <person name="Tekaia F."/>
            <person name="Turner G."/>
            <person name="Vazquez de Aldana C.R."/>
            <person name="Weidman J."/>
            <person name="White O."/>
            <person name="Woodward J.R."/>
            <person name="Yu J.-H."/>
            <person name="Fraser C.M."/>
            <person name="Galagan J.E."/>
            <person name="Asai K."/>
            <person name="Machida M."/>
            <person name="Hall N."/>
            <person name="Barrell B.G."/>
            <person name="Denning D.W."/>
        </authorList>
    </citation>
    <scope>NUCLEOTIDE SEQUENCE [LARGE SCALE GENOMIC DNA]</scope>
    <source>
        <strain>ATCC MYA-4609 / CBS 101355 / FGSC A1100 / Af293</strain>
    </source>
</reference>
<reference key="2">
    <citation type="journal article" date="2015" name="PLoS Pathog.">
        <title>Transcription factor somA is required for adhesion, development and virulence of the human pathogen Aspergillus fumigatus.</title>
        <authorList>
            <person name="Lin C.J."/>
            <person name="Sasse C."/>
            <person name="Gerke J."/>
            <person name="Valerius O."/>
            <person name="Irmer H."/>
            <person name="Frauendorf H."/>
            <person name="Heinekamp T."/>
            <person name="Strassburger M."/>
            <person name="Tran V.T."/>
            <person name="Herzog B."/>
            <person name="Braus-Stromeyer S.A."/>
            <person name="Braus G.H."/>
        </authorList>
    </citation>
    <scope>IDENTIFICATION BY MASS SPECTROMETRY</scope>
    <scope>INTERACTION WITH SOMA</scope>
    <scope>DISRUPTION PHENOTYPE</scope>
    <scope>FUNCTION</scope>
</reference>
<gene>
    <name evidence="4" type="primary">ptaB</name>
    <name type="ORF">AFUA_2G12910</name>
</gene>
<comment type="function">
    <text evidence="3">Transcriptional regulator that forms a complex with somA to control biofilm formation.</text>
</comment>
<comment type="subunit">
    <text evidence="3">Interacts with somA.</text>
</comment>
<comment type="subcellular location">
    <subcellularLocation>
        <location evidence="1">Nucleus</location>
    </subcellularLocation>
</comment>
<comment type="disruption phenotype">
    <text evidence="3">Leads to a reduced growth rate and a delayed conidiation.</text>
</comment>
<comment type="similarity">
    <text evidence="5">Belongs to the MFG1 family.</text>
</comment>
<evidence type="ECO:0000250" key="1">
    <source>
        <dbReference type="UniProtKB" id="Q07684"/>
    </source>
</evidence>
<evidence type="ECO:0000256" key="2">
    <source>
        <dbReference type="SAM" id="MobiDB-lite"/>
    </source>
</evidence>
<evidence type="ECO:0000269" key="3">
    <source>
    </source>
</evidence>
<evidence type="ECO:0000303" key="4">
    <source>
    </source>
</evidence>
<evidence type="ECO:0000305" key="5"/>
<protein>
    <recommendedName>
        <fullName evidence="5">Transcriptional activator ptaB</fullName>
    </recommendedName>
</protein>
<feature type="chain" id="PRO_0000435642" description="Transcriptional activator ptaB">
    <location>
        <begin position="1"/>
        <end position="729"/>
    </location>
</feature>
<feature type="region of interest" description="Disordered" evidence="2">
    <location>
        <begin position="1"/>
        <end position="69"/>
    </location>
</feature>
<feature type="region of interest" description="Disordered" evidence="2">
    <location>
        <begin position="207"/>
        <end position="341"/>
    </location>
</feature>
<feature type="region of interest" description="Disordered" evidence="2">
    <location>
        <begin position="505"/>
        <end position="538"/>
    </location>
</feature>
<feature type="region of interest" description="Disordered" evidence="2">
    <location>
        <begin position="614"/>
        <end position="729"/>
    </location>
</feature>
<feature type="compositionally biased region" description="Pro residues" evidence="2">
    <location>
        <begin position="1"/>
        <end position="12"/>
    </location>
</feature>
<feature type="compositionally biased region" description="Low complexity" evidence="2">
    <location>
        <begin position="38"/>
        <end position="56"/>
    </location>
</feature>
<feature type="compositionally biased region" description="Pro residues" evidence="2">
    <location>
        <begin position="272"/>
        <end position="285"/>
    </location>
</feature>
<feature type="compositionally biased region" description="Low complexity" evidence="2">
    <location>
        <begin position="286"/>
        <end position="300"/>
    </location>
</feature>
<feature type="compositionally biased region" description="Low complexity" evidence="2">
    <location>
        <begin position="307"/>
        <end position="341"/>
    </location>
</feature>
<feature type="compositionally biased region" description="Polar residues" evidence="2">
    <location>
        <begin position="614"/>
        <end position="625"/>
    </location>
</feature>
<feature type="compositionally biased region" description="Low complexity" evidence="2">
    <location>
        <begin position="655"/>
        <end position="671"/>
    </location>
</feature>
<feature type="compositionally biased region" description="Polar residues" evidence="2">
    <location>
        <begin position="672"/>
        <end position="682"/>
    </location>
</feature>
<keyword id="KW-0010">Activator</keyword>
<keyword id="KW-0539">Nucleus</keyword>
<keyword id="KW-1185">Reference proteome</keyword>
<keyword id="KW-0804">Transcription</keyword>
<keyword id="KW-0805">Transcription regulation</keyword>
<organism>
    <name type="scientific">Aspergillus fumigatus (strain ATCC MYA-4609 / CBS 101355 / FGSC A1100 / Af293)</name>
    <name type="common">Neosartorya fumigata</name>
    <dbReference type="NCBI Taxonomy" id="330879"/>
    <lineage>
        <taxon>Eukaryota</taxon>
        <taxon>Fungi</taxon>
        <taxon>Dikarya</taxon>
        <taxon>Ascomycota</taxon>
        <taxon>Pezizomycotina</taxon>
        <taxon>Eurotiomycetes</taxon>
        <taxon>Eurotiomycetidae</taxon>
        <taxon>Eurotiales</taxon>
        <taxon>Aspergillaceae</taxon>
        <taxon>Aspergillus</taxon>
        <taxon>Aspergillus subgen. Fumigati</taxon>
    </lineage>
</organism>
<sequence length="729" mass="78784">MPQHPGLPPGHPMAPGQHPNAHPGAGMVQAVHPGVSAPGGPQVTQGGPMMGMPPGAGTTGPGGPVQAHALSHLGPAQAHLFQQPQFAQTFANNPQLLQQHQHQQQILRQRMMFQQQQAAQQQQHAGLPVSLPNGTQGLNAAQLAAMQANSGMRPVNLQMHLQQMPHGPQNIQQQQQQLFAMQQAQQAQQAHQAQQAQQAQQAQQAAAAAAAAAAQPGQHTPQQRHAAHPQNMHDAQSVTPQPQPPPHQGSSTPQSNPPQPPSSQPQQQPGAAPQPHPTPNPPPQQLPQAQQPGQQPHQQPQQPPQQQPQQQQSQQGQPQGQQQQMTPQEAQMKAQQTQNQAAMMMQQRMGMKGTSILALLTFAEHLSNFTSRGEAQDLLYWQAFVDKFYSPVGVLRQGVYNPQAGSKQFEISTPALARYYLTQFTSGIRQIQMLVEGARERDSPNGGRIVESRRTSFIYWFTNESQLFTNGTLIAHFDHNNKIEMLDIVVMNHTEYLPRSQLQPLELSEQKQSPKVSKNLGKRAQQKQAQQAAPSLPESMVTANGVPTAVMSFLEVAETISHMQMLFQFSQQNPQFSPPEALRNLVNTLQSQNPNPGFMPSPMNPAMQQGQNLRGPQMNGPNQFASPAMAHLGLPPQGSPHLSAHPSPAQSHLAGPPGMVQQGQMQPNVGQATSASASPQVTNKRRRASTVKVENDDTGGPEVNGTATQGAAKVKASPRVGGKRQKGTA</sequence>
<proteinExistence type="evidence at protein level"/>
<name>PTAB_ASPFU</name>
<dbReference type="EMBL" id="AAHF01000001">
    <property type="protein sequence ID" value="EAL93584.1"/>
    <property type="molecule type" value="Genomic_DNA"/>
</dbReference>
<dbReference type="RefSeq" id="XP_755622.1">
    <property type="nucleotide sequence ID" value="XM_750529.1"/>
</dbReference>
<dbReference type="STRING" id="330879.Q4X0N1"/>
<dbReference type="EnsemblFungi" id="EAL93584">
    <property type="protein sequence ID" value="EAL93584"/>
    <property type="gene ID" value="AFUA_2G12910"/>
</dbReference>
<dbReference type="GeneID" id="3512755"/>
<dbReference type="KEGG" id="afm:AFUA_2G12910"/>
<dbReference type="eggNOG" id="ENOG502S0PM">
    <property type="taxonomic scope" value="Eukaryota"/>
</dbReference>
<dbReference type="HOGENOM" id="CLU_009804_2_0_1"/>
<dbReference type="InParanoid" id="Q4X0N1"/>
<dbReference type="OMA" id="AHLFQQP"/>
<dbReference type="OrthoDB" id="774557at2759"/>
<dbReference type="Proteomes" id="UP000002530">
    <property type="component" value="Chromosome 2"/>
</dbReference>
<dbReference type="GO" id="GO:0005634">
    <property type="term" value="C:nucleus"/>
    <property type="evidence" value="ECO:0000318"/>
    <property type="project" value="GO_Central"/>
</dbReference>
<dbReference type="GO" id="GO:0005667">
    <property type="term" value="C:transcription regulator complex"/>
    <property type="evidence" value="ECO:0000318"/>
    <property type="project" value="GO_Central"/>
</dbReference>
<dbReference type="GO" id="GO:0003712">
    <property type="term" value="F:transcription coregulator activity"/>
    <property type="evidence" value="ECO:0000318"/>
    <property type="project" value="GO_Central"/>
</dbReference>
<dbReference type="GO" id="GO:0000122">
    <property type="term" value="P:negative regulation of transcription by RNA polymerase II"/>
    <property type="evidence" value="ECO:0000318"/>
    <property type="project" value="GO_Central"/>
</dbReference>
<dbReference type="GO" id="GO:0045944">
    <property type="term" value="P:positive regulation of transcription by RNA polymerase II"/>
    <property type="evidence" value="ECO:0000318"/>
    <property type="project" value="GO_Central"/>
</dbReference>
<dbReference type="InterPro" id="IPR029005">
    <property type="entry name" value="LIM-bd/SEUSS"/>
</dbReference>
<dbReference type="PANTHER" id="PTHR10378">
    <property type="entry name" value="LIM DOMAIN-BINDING PROTEIN"/>
    <property type="match status" value="1"/>
</dbReference>
<dbReference type="Pfam" id="PF01803">
    <property type="entry name" value="LIM_bind"/>
    <property type="match status" value="1"/>
</dbReference>
<accession>Q4X0N1</accession>